<keyword id="KW-0456">Lyase</keyword>
<keyword id="KW-0460">Magnesium</keyword>
<keyword id="KW-0479">Metal-binding</keyword>
<protein>
    <recommendedName>
        <fullName evidence="1">5-keto-4-deoxy-D-glucarate aldolase</fullName>
        <shortName evidence="1">KDGluc aldolase</shortName>
        <shortName evidence="1">KDGlucA</shortName>
        <ecNumber evidence="1">4.1.2.20</ecNumber>
    </recommendedName>
    <alternativeName>
        <fullName evidence="1">2-dehydro-3-deoxy-D-glucarate aldolase</fullName>
    </alternativeName>
    <alternativeName>
        <fullName evidence="1">2-keto-3-deoxy-D-glucarate aldolase</fullName>
    </alternativeName>
    <alternativeName>
        <fullName evidence="1">5-dehydro-4-deoxy-D-glucarate aldolase</fullName>
    </alternativeName>
    <alternativeName>
        <fullName evidence="1">Alpha-keto-beta-deoxy-D-glucarate aldolase</fullName>
    </alternativeName>
</protein>
<name>GARL_ECOLU</name>
<proteinExistence type="inferred from homology"/>
<accession>B7NDB2</accession>
<gene>
    <name evidence="1" type="primary">garL</name>
    <name type="ordered locus">ECUMN_3608</name>
</gene>
<reference key="1">
    <citation type="journal article" date="2009" name="PLoS Genet.">
        <title>Organised genome dynamics in the Escherichia coli species results in highly diverse adaptive paths.</title>
        <authorList>
            <person name="Touchon M."/>
            <person name="Hoede C."/>
            <person name="Tenaillon O."/>
            <person name="Barbe V."/>
            <person name="Baeriswyl S."/>
            <person name="Bidet P."/>
            <person name="Bingen E."/>
            <person name="Bonacorsi S."/>
            <person name="Bouchier C."/>
            <person name="Bouvet O."/>
            <person name="Calteau A."/>
            <person name="Chiapello H."/>
            <person name="Clermont O."/>
            <person name="Cruveiller S."/>
            <person name="Danchin A."/>
            <person name="Diard M."/>
            <person name="Dossat C."/>
            <person name="Karoui M.E."/>
            <person name="Frapy E."/>
            <person name="Garry L."/>
            <person name="Ghigo J.M."/>
            <person name="Gilles A.M."/>
            <person name="Johnson J."/>
            <person name="Le Bouguenec C."/>
            <person name="Lescat M."/>
            <person name="Mangenot S."/>
            <person name="Martinez-Jehanne V."/>
            <person name="Matic I."/>
            <person name="Nassif X."/>
            <person name="Oztas S."/>
            <person name="Petit M.A."/>
            <person name="Pichon C."/>
            <person name="Rouy Z."/>
            <person name="Ruf C.S."/>
            <person name="Schneider D."/>
            <person name="Tourret J."/>
            <person name="Vacherie B."/>
            <person name="Vallenet D."/>
            <person name="Medigue C."/>
            <person name="Rocha E.P.C."/>
            <person name="Denamur E."/>
        </authorList>
    </citation>
    <scope>NUCLEOTIDE SEQUENCE [LARGE SCALE GENOMIC DNA]</scope>
    <source>
        <strain>UMN026 / ExPEC</strain>
    </source>
</reference>
<evidence type="ECO:0000255" key="1">
    <source>
        <dbReference type="HAMAP-Rule" id="MF_01291"/>
    </source>
</evidence>
<comment type="function">
    <text evidence="1">Catalyzes the reversible retro-aldol cleavage of both 5-keto-4-deoxy-D-glucarate and 2-keto-3-deoxy-D-glucarate to pyruvate and tartronic semialdehyde.</text>
</comment>
<comment type="catalytic activity">
    <reaction evidence="1">
        <text>5-dehydro-4-deoxy-D-glucarate = 2-hydroxy-3-oxopropanoate + pyruvate</text>
        <dbReference type="Rhea" id="RHEA:27726"/>
        <dbReference type="ChEBI" id="CHEBI:15361"/>
        <dbReference type="ChEBI" id="CHEBI:42819"/>
        <dbReference type="ChEBI" id="CHEBI:57978"/>
    </reaction>
</comment>
<comment type="catalytic activity">
    <reaction evidence="1">
        <text>2-dehydro-3-deoxy-D-glucarate = 2-hydroxy-3-oxopropanoate + pyruvate</text>
        <dbReference type="Rhea" id="RHEA:10268"/>
        <dbReference type="ChEBI" id="CHEBI:15361"/>
        <dbReference type="ChEBI" id="CHEBI:57978"/>
        <dbReference type="ChEBI" id="CHEBI:58098"/>
        <dbReference type="EC" id="4.1.2.20"/>
    </reaction>
</comment>
<comment type="cofactor">
    <cofactor evidence="1">
        <name>Mg(2+)</name>
        <dbReference type="ChEBI" id="CHEBI:18420"/>
    </cofactor>
    <text evidence="1">Binds 1 Mg(2+) ion per subunit.</text>
</comment>
<comment type="pathway">
    <text evidence="1">Carbohydrate acid metabolism; galactarate degradation; D-glycerate from galactarate: step 2/3.</text>
</comment>
<comment type="subunit">
    <text evidence="1">Homohexamer; trimer of dimers.</text>
</comment>
<comment type="similarity">
    <text evidence="1">Belongs to the HpcH/HpaI aldolase family. KDGluc aldolase subfamily.</text>
</comment>
<sequence length="256" mass="27399">MNNDVFPNKFKAALAAKQVQIGCWSALSNPISTEVLGLAGFDWLVLDGEHAPNDISTFIPQLMALKGSASAPVVRVPTNEPVIIKRLLDIGFYNFLIPFVETKEEAEQAVASTRYPPEGIRGVSVSHRANMFGTVADYFAQSNKNITILVQIESQQGVDNVDAIAATEGVDGIFVGPSDLAAALGHLGNASHPDVQKAIQHIFNRASAHGKPSGILAPVEADARRYLEWGATFVAVGSDLGVFRSATQKLADTFKK</sequence>
<organism>
    <name type="scientific">Escherichia coli O17:K52:H18 (strain UMN026 / ExPEC)</name>
    <dbReference type="NCBI Taxonomy" id="585056"/>
    <lineage>
        <taxon>Bacteria</taxon>
        <taxon>Pseudomonadati</taxon>
        <taxon>Pseudomonadota</taxon>
        <taxon>Gammaproteobacteria</taxon>
        <taxon>Enterobacterales</taxon>
        <taxon>Enterobacteriaceae</taxon>
        <taxon>Escherichia</taxon>
    </lineage>
</organism>
<dbReference type="EC" id="4.1.2.20" evidence="1"/>
<dbReference type="EMBL" id="CU928163">
    <property type="protein sequence ID" value="CAR14762.1"/>
    <property type="molecule type" value="Genomic_DNA"/>
</dbReference>
<dbReference type="RefSeq" id="WP_001058227.1">
    <property type="nucleotide sequence ID" value="NC_011751.1"/>
</dbReference>
<dbReference type="RefSeq" id="YP_002414267.1">
    <property type="nucleotide sequence ID" value="NC_011751.1"/>
</dbReference>
<dbReference type="SMR" id="B7NDB2"/>
<dbReference type="STRING" id="585056.ECUMN_3608"/>
<dbReference type="GeneID" id="93778860"/>
<dbReference type="KEGG" id="eum:ECUMN_3608"/>
<dbReference type="PATRIC" id="fig|585056.7.peg.3786"/>
<dbReference type="HOGENOM" id="CLU_059964_1_0_6"/>
<dbReference type="UniPathway" id="UPA00565">
    <property type="reaction ID" value="UER00630"/>
</dbReference>
<dbReference type="Proteomes" id="UP000007097">
    <property type="component" value="Chromosome"/>
</dbReference>
<dbReference type="GO" id="GO:0005737">
    <property type="term" value="C:cytoplasm"/>
    <property type="evidence" value="ECO:0007669"/>
    <property type="project" value="TreeGrafter"/>
</dbReference>
<dbReference type="GO" id="GO:0008672">
    <property type="term" value="F:2-dehydro-3-deoxyglucarate aldolase activity"/>
    <property type="evidence" value="ECO:0007669"/>
    <property type="project" value="UniProtKB-UniRule"/>
</dbReference>
<dbReference type="GO" id="GO:0000287">
    <property type="term" value="F:magnesium ion binding"/>
    <property type="evidence" value="ECO:0007669"/>
    <property type="project" value="UniProtKB-UniRule"/>
</dbReference>
<dbReference type="GO" id="GO:0042838">
    <property type="term" value="P:D-glucarate catabolic process"/>
    <property type="evidence" value="ECO:0007669"/>
    <property type="project" value="UniProtKB-UniRule"/>
</dbReference>
<dbReference type="GO" id="GO:0046392">
    <property type="term" value="P:galactarate catabolic process"/>
    <property type="evidence" value="ECO:0007669"/>
    <property type="project" value="UniProtKB-UniRule"/>
</dbReference>
<dbReference type="FunFam" id="3.20.20.60:FF:000004">
    <property type="entry name" value="5-keto-4-deoxy-D-glucarate aldolase"/>
    <property type="match status" value="1"/>
</dbReference>
<dbReference type="Gene3D" id="3.20.20.60">
    <property type="entry name" value="Phosphoenolpyruvate-binding domains"/>
    <property type="match status" value="1"/>
</dbReference>
<dbReference type="HAMAP" id="MF_01291">
    <property type="entry name" value="KDGluc_aldolase"/>
    <property type="match status" value="1"/>
</dbReference>
<dbReference type="InterPro" id="IPR005000">
    <property type="entry name" value="Aldolase/citrate-lyase_domain"/>
</dbReference>
<dbReference type="InterPro" id="IPR017648">
    <property type="entry name" value="GarL"/>
</dbReference>
<dbReference type="InterPro" id="IPR050251">
    <property type="entry name" value="HpcH-HpaI_aldolase"/>
</dbReference>
<dbReference type="InterPro" id="IPR015813">
    <property type="entry name" value="Pyrv/PenolPyrv_kinase-like_dom"/>
</dbReference>
<dbReference type="InterPro" id="IPR040442">
    <property type="entry name" value="Pyrv_kinase-like_dom_sf"/>
</dbReference>
<dbReference type="NCBIfam" id="TIGR03239">
    <property type="entry name" value="GarL"/>
    <property type="match status" value="1"/>
</dbReference>
<dbReference type="NCBIfam" id="NF007849">
    <property type="entry name" value="PRK10558.1"/>
    <property type="match status" value="1"/>
</dbReference>
<dbReference type="PANTHER" id="PTHR30502">
    <property type="entry name" value="2-KETO-3-DEOXY-L-RHAMNONATE ALDOLASE"/>
    <property type="match status" value="1"/>
</dbReference>
<dbReference type="PANTHER" id="PTHR30502:SF4">
    <property type="entry name" value="5-KETO-4-DEOXY-D-GLUCARATE ALDOLASE"/>
    <property type="match status" value="1"/>
</dbReference>
<dbReference type="Pfam" id="PF03328">
    <property type="entry name" value="HpcH_HpaI"/>
    <property type="match status" value="1"/>
</dbReference>
<dbReference type="SUPFAM" id="SSF51621">
    <property type="entry name" value="Phosphoenolpyruvate/pyruvate domain"/>
    <property type="match status" value="1"/>
</dbReference>
<feature type="chain" id="PRO_1000140408" description="5-keto-4-deoxy-D-glucarate aldolase">
    <location>
        <begin position="1"/>
        <end position="256"/>
    </location>
</feature>
<feature type="active site" description="Proton acceptor" evidence="1">
    <location>
        <position position="50"/>
    </location>
</feature>
<feature type="binding site" evidence="1">
    <location>
        <position position="151"/>
    </location>
    <ligand>
        <name>substrate</name>
    </ligand>
</feature>
<feature type="binding site" evidence="1">
    <location>
        <position position="153"/>
    </location>
    <ligand>
        <name>Mg(2+)</name>
        <dbReference type="ChEBI" id="CHEBI:18420"/>
    </ligand>
</feature>
<feature type="binding site" evidence="1">
    <location>
        <position position="178"/>
    </location>
    <ligand>
        <name>substrate</name>
    </ligand>
</feature>
<feature type="binding site" evidence="1">
    <location>
        <position position="179"/>
    </location>
    <ligand>
        <name>Mg(2+)</name>
        <dbReference type="ChEBI" id="CHEBI:18420"/>
    </ligand>
</feature>
<feature type="binding site" evidence="1">
    <location>
        <position position="179"/>
    </location>
    <ligand>
        <name>substrate</name>
    </ligand>
</feature>
<feature type="site" description="Transition state stabilizer" evidence="1">
    <location>
        <position position="75"/>
    </location>
</feature>
<feature type="site" description="Increases basicity of active site His" evidence="1">
    <location>
        <position position="89"/>
    </location>
</feature>